<sequence length="284" mass="30825">MKQKVVSIGDINVANDLPFVLFGGMNVLESRDLAMRICEHYVTVTQKLGIPYVFKASFDKANRSSIHSYRGPGLEEGMKIFQELKQTFGVKIITDVHEASQAQPVADVVDVIQLPAFLARQTDLVEAMAKTGAVINVKKPQFVSPGQMGNIVDKFIEGGNDKVILCDRGANFGYDNLVVDMLGFGVMKKASNNSPVIFDVTHALQCRDPFGAASGGRRAQVSELARAGMAVGIAGLFIEAHPDPDHAKCDGPSALPLDKLEPFLKQMKAIDDLVKSFDELDTSK</sequence>
<gene>
    <name evidence="1" type="primary">kdsA</name>
    <name type="ordered locus">KPN78578_21950</name>
    <name type="ORF">KPN_02230</name>
</gene>
<reference key="1">
    <citation type="submission" date="2006-09" db="EMBL/GenBank/DDBJ databases">
        <authorList>
            <consortium name="The Klebsiella pneumonia Genome Sequencing Project"/>
            <person name="McClelland M."/>
            <person name="Sanderson E.K."/>
            <person name="Spieth J."/>
            <person name="Clifton W.S."/>
            <person name="Latreille P."/>
            <person name="Sabo A."/>
            <person name="Pepin K."/>
            <person name="Bhonagiri V."/>
            <person name="Porwollik S."/>
            <person name="Ali J."/>
            <person name="Wilson R.K."/>
        </authorList>
    </citation>
    <scope>NUCLEOTIDE SEQUENCE [LARGE SCALE GENOMIC DNA]</scope>
    <source>
        <strain>ATCC 700721 / MGH 78578</strain>
    </source>
</reference>
<feature type="chain" id="PRO_1000003338" description="2-dehydro-3-deoxyphosphooctonate aldolase">
    <location>
        <begin position="1"/>
        <end position="284"/>
    </location>
</feature>
<proteinExistence type="inferred from homology"/>
<dbReference type="EC" id="2.5.1.55" evidence="1"/>
<dbReference type="EMBL" id="CP000647">
    <property type="protein sequence ID" value="ABR77656.1"/>
    <property type="molecule type" value="Genomic_DNA"/>
</dbReference>
<dbReference type="RefSeq" id="WP_002910393.1">
    <property type="nucleotide sequence ID" value="NC_009648.1"/>
</dbReference>
<dbReference type="SMR" id="A6TAN5"/>
<dbReference type="STRING" id="272620.KPN_02230"/>
<dbReference type="jPOST" id="A6TAN5"/>
<dbReference type="PaxDb" id="272620-KPN_02230"/>
<dbReference type="EnsemblBacteria" id="ABR77656">
    <property type="protein sequence ID" value="ABR77656"/>
    <property type="gene ID" value="KPN_02230"/>
</dbReference>
<dbReference type="GeneID" id="93272624"/>
<dbReference type="KEGG" id="kpn:KPN_02230"/>
<dbReference type="HOGENOM" id="CLU_036666_0_0_6"/>
<dbReference type="UniPathway" id="UPA00030"/>
<dbReference type="UniPathway" id="UPA00357">
    <property type="reaction ID" value="UER00474"/>
</dbReference>
<dbReference type="Proteomes" id="UP000000265">
    <property type="component" value="Chromosome"/>
</dbReference>
<dbReference type="GO" id="GO:0005737">
    <property type="term" value="C:cytoplasm"/>
    <property type="evidence" value="ECO:0007669"/>
    <property type="project" value="UniProtKB-SubCell"/>
</dbReference>
<dbReference type="GO" id="GO:0008676">
    <property type="term" value="F:3-deoxy-8-phosphooctulonate synthase activity"/>
    <property type="evidence" value="ECO:0007669"/>
    <property type="project" value="UniProtKB-UniRule"/>
</dbReference>
<dbReference type="GO" id="GO:0019294">
    <property type="term" value="P:keto-3-deoxy-D-manno-octulosonic acid biosynthetic process"/>
    <property type="evidence" value="ECO:0007669"/>
    <property type="project" value="UniProtKB-UniRule"/>
</dbReference>
<dbReference type="FunFam" id="3.20.20.70:FF:000058">
    <property type="entry name" value="2-dehydro-3-deoxyphosphooctonate aldolase"/>
    <property type="match status" value="1"/>
</dbReference>
<dbReference type="Gene3D" id="3.20.20.70">
    <property type="entry name" value="Aldolase class I"/>
    <property type="match status" value="1"/>
</dbReference>
<dbReference type="HAMAP" id="MF_00056">
    <property type="entry name" value="KDO8P_synth"/>
    <property type="match status" value="1"/>
</dbReference>
<dbReference type="InterPro" id="IPR013785">
    <property type="entry name" value="Aldolase_TIM"/>
</dbReference>
<dbReference type="InterPro" id="IPR006218">
    <property type="entry name" value="DAHP1/KDSA"/>
</dbReference>
<dbReference type="InterPro" id="IPR006269">
    <property type="entry name" value="KDO8P_synthase"/>
</dbReference>
<dbReference type="NCBIfam" id="TIGR01362">
    <property type="entry name" value="KDO8P_synth"/>
    <property type="match status" value="1"/>
</dbReference>
<dbReference type="NCBIfam" id="NF003543">
    <property type="entry name" value="PRK05198.1"/>
    <property type="match status" value="1"/>
</dbReference>
<dbReference type="NCBIfam" id="NF009109">
    <property type="entry name" value="PRK12457.1"/>
    <property type="match status" value="1"/>
</dbReference>
<dbReference type="PANTHER" id="PTHR21057">
    <property type="entry name" value="PHOSPHO-2-DEHYDRO-3-DEOXYHEPTONATE ALDOLASE"/>
    <property type="match status" value="1"/>
</dbReference>
<dbReference type="Pfam" id="PF00793">
    <property type="entry name" value="DAHP_synth_1"/>
    <property type="match status" value="1"/>
</dbReference>
<dbReference type="SUPFAM" id="SSF51569">
    <property type="entry name" value="Aldolase"/>
    <property type="match status" value="1"/>
</dbReference>
<protein>
    <recommendedName>
        <fullName evidence="1">2-dehydro-3-deoxyphosphooctonate aldolase</fullName>
        <ecNumber evidence="1">2.5.1.55</ecNumber>
    </recommendedName>
    <alternativeName>
        <fullName evidence="1">3-deoxy-D-manno-octulosonic acid 8-phosphate synthase</fullName>
    </alternativeName>
    <alternativeName>
        <fullName evidence="1">KDO-8-phosphate synthase</fullName>
        <shortName evidence="1">KDO 8-P synthase</shortName>
        <shortName evidence="1">KDOPS</shortName>
    </alternativeName>
    <alternativeName>
        <fullName evidence="1">Phospho-2-dehydro-3-deoxyoctonate aldolase</fullName>
    </alternativeName>
</protein>
<evidence type="ECO:0000255" key="1">
    <source>
        <dbReference type="HAMAP-Rule" id="MF_00056"/>
    </source>
</evidence>
<accession>A6TAN5</accession>
<keyword id="KW-0963">Cytoplasm</keyword>
<keyword id="KW-0448">Lipopolysaccharide biosynthesis</keyword>
<keyword id="KW-0808">Transferase</keyword>
<comment type="catalytic activity">
    <reaction evidence="1">
        <text>D-arabinose 5-phosphate + phosphoenolpyruvate + H2O = 3-deoxy-alpha-D-manno-2-octulosonate-8-phosphate + phosphate</text>
        <dbReference type="Rhea" id="RHEA:14053"/>
        <dbReference type="ChEBI" id="CHEBI:15377"/>
        <dbReference type="ChEBI" id="CHEBI:43474"/>
        <dbReference type="ChEBI" id="CHEBI:57693"/>
        <dbReference type="ChEBI" id="CHEBI:58702"/>
        <dbReference type="ChEBI" id="CHEBI:85985"/>
        <dbReference type="EC" id="2.5.1.55"/>
    </reaction>
</comment>
<comment type="pathway">
    <text evidence="1">Carbohydrate biosynthesis; 3-deoxy-D-manno-octulosonate biosynthesis; 3-deoxy-D-manno-octulosonate from D-ribulose 5-phosphate: step 2/3.</text>
</comment>
<comment type="pathway">
    <text evidence="1">Bacterial outer membrane biogenesis; lipopolysaccharide biosynthesis.</text>
</comment>
<comment type="subcellular location">
    <subcellularLocation>
        <location evidence="1">Cytoplasm</location>
    </subcellularLocation>
</comment>
<comment type="similarity">
    <text evidence="1">Belongs to the KdsA family.</text>
</comment>
<organism>
    <name type="scientific">Klebsiella pneumoniae subsp. pneumoniae (strain ATCC 700721 / MGH 78578)</name>
    <dbReference type="NCBI Taxonomy" id="272620"/>
    <lineage>
        <taxon>Bacteria</taxon>
        <taxon>Pseudomonadati</taxon>
        <taxon>Pseudomonadota</taxon>
        <taxon>Gammaproteobacteria</taxon>
        <taxon>Enterobacterales</taxon>
        <taxon>Enterobacteriaceae</taxon>
        <taxon>Klebsiella/Raoultella group</taxon>
        <taxon>Klebsiella</taxon>
        <taxon>Klebsiella pneumoniae complex</taxon>
    </lineage>
</organism>
<name>KDSA_KLEP7</name>